<dbReference type="EC" id="3.6.1.31" evidence="1"/>
<dbReference type="EMBL" id="CP001399">
    <property type="protein sequence ID" value="ACP35646.1"/>
    <property type="molecule type" value="Genomic_DNA"/>
</dbReference>
<dbReference type="RefSeq" id="WP_012711528.1">
    <property type="nucleotide sequence ID" value="NC_012589.1"/>
</dbReference>
<dbReference type="SMR" id="C3MQI3"/>
<dbReference type="GeneID" id="84061845"/>
<dbReference type="KEGG" id="sis:LS215_1642"/>
<dbReference type="HOGENOM" id="CLU_123337_0_0_2"/>
<dbReference type="OrthoDB" id="39686at2157"/>
<dbReference type="UniPathway" id="UPA00031">
    <property type="reaction ID" value="UER00007"/>
</dbReference>
<dbReference type="Proteomes" id="UP000001747">
    <property type="component" value="Chromosome"/>
</dbReference>
<dbReference type="GO" id="GO:0005737">
    <property type="term" value="C:cytoplasm"/>
    <property type="evidence" value="ECO:0007669"/>
    <property type="project" value="UniProtKB-SubCell"/>
</dbReference>
<dbReference type="GO" id="GO:0005524">
    <property type="term" value="F:ATP binding"/>
    <property type="evidence" value="ECO:0007669"/>
    <property type="project" value="UniProtKB-KW"/>
</dbReference>
<dbReference type="GO" id="GO:0004636">
    <property type="term" value="F:phosphoribosyl-ATP diphosphatase activity"/>
    <property type="evidence" value="ECO:0007669"/>
    <property type="project" value="UniProtKB-UniRule"/>
</dbReference>
<dbReference type="GO" id="GO:0000105">
    <property type="term" value="P:L-histidine biosynthetic process"/>
    <property type="evidence" value="ECO:0007669"/>
    <property type="project" value="UniProtKB-UniRule"/>
</dbReference>
<dbReference type="CDD" id="cd11534">
    <property type="entry name" value="NTP-PPase_HisIE_like"/>
    <property type="match status" value="1"/>
</dbReference>
<dbReference type="Gene3D" id="1.10.287.1080">
    <property type="entry name" value="MazG-like"/>
    <property type="match status" value="1"/>
</dbReference>
<dbReference type="HAMAP" id="MF_01020">
    <property type="entry name" value="HisE"/>
    <property type="match status" value="1"/>
</dbReference>
<dbReference type="InterPro" id="IPR008179">
    <property type="entry name" value="HisE"/>
</dbReference>
<dbReference type="InterPro" id="IPR021130">
    <property type="entry name" value="PRib-ATP_PPHydrolase-like"/>
</dbReference>
<dbReference type="NCBIfam" id="TIGR03188">
    <property type="entry name" value="histidine_hisI"/>
    <property type="match status" value="1"/>
</dbReference>
<dbReference type="PANTHER" id="PTHR42945">
    <property type="entry name" value="HISTIDINE BIOSYNTHESIS BIFUNCTIONAL PROTEIN"/>
    <property type="match status" value="1"/>
</dbReference>
<dbReference type="PANTHER" id="PTHR42945:SF1">
    <property type="entry name" value="HISTIDINE BIOSYNTHESIS BIFUNCTIONAL PROTEIN HIS7"/>
    <property type="match status" value="1"/>
</dbReference>
<dbReference type="Pfam" id="PF01503">
    <property type="entry name" value="PRA-PH"/>
    <property type="match status" value="1"/>
</dbReference>
<dbReference type="SUPFAM" id="SSF101386">
    <property type="entry name" value="all-alpha NTP pyrophosphatases"/>
    <property type="match status" value="1"/>
</dbReference>
<evidence type="ECO:0000255" key="1">
    <source>
        <dbReference type="HAMAP-Rule" id="MF_01020"/>
    </source>
</evidence>
<organism>
    <name type="scientific">Saccharolobus islandicus (strain L.S.2.15 / Lassen #1)</name>
    <name type="common">Sulfolobus islandicus</name>
    <dbReference type="NCBI Taxonomy" id="429572"/>
    <lineage>
        <taxon>Archaea</taxon>
        <taxon>Thermoproteota</taxon>
        <taxon>Thermoprotei</taxon>
        <taxon>Sulfolobales</taxon>
        <taxon>Sulfolobaceae</taxon>
        <taxon>Saccharolobus</taxon>
    </lineage>
</organism>
<proteinExistence type="inferred from homology"/>
<keyword id="KW-0028">Amino-acid biosynthesis</keyword>
<keyword id="KW-0067">ATP-binding</keyword>
<keyword id="KW-0963">Cytoplasm</keyword>
<keyword id="KW-0368">Histidine biosynthesis</keyword>
<keyword id="KW-0378">Hydrolase</keyword>
<keyword id="KW-0547">Nucleotide-binding</keyword>
<comment type="catalytic activity">
    <reaction evidence="1">
        <text>1-(5-phospho-beta-D-ribosyl)-ATP + H2O = 1-(5-phospho-beta-D-ribosyl)-5'-AMP + diphosphate + H(+)</text>
        <dbReference type="Rhea" id="RHEA:22828"/>
        <dbReference type="ChEBI" id="CHEBI:15377"/>
        <dbReference type="ChEBI" id="CHEBI:15378"/>
        <dbReference type="ChEBI" id="CHEBI:33019"/>
        <dbReference type="ChEBI" id="CHEBI:59457"/>
        <dbReference type="ChEBI" id="CHEBI:73183"/>
        <dbReference type="EC" id="3.6.1.31"/>
    </reaction>
</comment>
<comment type="pathway">
    <text evidence="1">Amino-acid biosynthesis; L-histidine biosynthesis; L-histidine from 5-phospho-alpha-D-ribose 1-diphosphate: step 2/9.</text>
</comment>
<comment type="subcellular location">
    <subcellularLocation>
        <location evidence="1">Cytoplasm</location>
    </subcellularLocation>
</comment>
<comment type="similarity">
    <text evidence="1">Belongs to the PRA-PH family.</text>
</comment>
<gene>
    <name evidence="1" type="primary">hisE</name>
    <name type="ordered locus">LS215_1642</name>
</gene>
<accession>C3MQI3</accession>
<reference key="1">
    <citation type="journal article" date="2009" name="Proc. Natl. Acad. Sci. U.S.A.">
        <title>Biogeography of the Sulfolobus islandicus pan-genome.</title>
        <authorList>
            <person name="Reno M.L."/>
            <person name="Held N.L."/>
            <person name="Fields C.J."/>
            <person name="Burke P.V."/>
            <person name="Whitaker R.J."/>
        </authorList>
    </citation>
    <scope>NUCLEOTIDE SEQUENCE [LARGE SCALE GENOMIC DNA]</scope>
    <source>
        <strain>L.S.2.15 / Lassen #1</strain>
    </source>
</reference>
<name>HIS2_SACI2</name>
<sequence>MSNEIVDKLYKVILDRIEKRPTGSYTAEIVNKGKAYVARKVGEESVETIVASLAENKERFISEVADLIYHLLVLMALEGVTPDDIYRELERRRK</sequence>
<feature type="chain" id="PRO_1000213292" description="Phosphoribosyl-ATP pyrophosphatase">
    <location>
        <begin position="1"/>
        <end position="94"/>
    </location>
</feature>
<protein>
    <recommendedName>
        <fullName evidence="1">Phosphoribosyl-ATP pyrophosphatase</fullName>
        <shortName evidence="1">PRA-PH</shortName>
        <ecNumber evidence="1">3.6.1.31</ecNumber>
    </recommendedName>
</protein>